<organism>
    <name type="scientific">Bacillus cereus (strain ATCC 14579 / DSM 31 / CCUG 7414 / JCM 2152 / NBRC 15305 / NCIMB 9373 / NCTC 2599 / NRRL B-3711)</name>
    <dbReference type="NCBI Taxonomy" id="226900"/>
    <lineage>
        <taxon>Bacteria</taxon>
        <taxon>Bacillati</taxon>
        <taxon>Bacillota</taxon>
        <taxon>Bacilli</taxon>
        <taxon>Bacillales</taxon>
        <taxon>Bacillaceae</taxon>
        <taxon>Bacillus</taxon>
        <taxon>Bacillus cereus group</taxon>
    </lineage>
</organism>
<sequence>MYTLIIPAAGQGKRMGAGKNKLFLLIDEVPIIVHTLRAFEKDKACKSIIMAINEEERPYFEELMQKYQIEKHVQFIQGGAERQDSVYNALQYASGVEYVLVHDGARPFVTNKVIRDVLTAAEKYGASICAVPVKDTVKKVEQGVVVETVERSQLNAVQTPQGFSVSLLLEAHRSAKQSCFLGTDDASLVERVGKQVGVVEGSYYNIKVTTPEDLLIAESFLRVQKK</sequence>
<keyword id="KW-0414">Isoprene biosynthesis</keyword>
<keyword id="KW-0548">Nucleotidyltransferase</keyword>
<keyword id="KW-1185">Reference proteome</keyword>
<keyword id="KW-0808">Transferase</keyword>
<dbReference type="EC" id="2.7.7.60" evidence="1"/>
<dbReference type="EMBL" id="AE016877">
    <property type="protein sequence ID" value="AAP07188.1"/>
    <property type="molecule type" value="Genomic_DNA"/>
</dbReference>
<dbReference type="RefSeq" id="NP_829987.1">
    <property type="nucleotide sequence ID" value="NC_004722.1"/>
</dbReference>
<dbReference type="RefSeq" id="WP_000288284.1">
    <property type="nucleotide sequence ID" value="NZ_CP138336.1"/>
</dbReference>
<dbReference type="SMR" id="Q81J63"/>
<dbReference type="STRING" id="226900.BC_0106"/>
<dbReference type="KEGG" id="bce:BC0106"/>
<dbReference type="PATRIC" id="fig|226900.8.peg.108"/>
<dbReference type="HOGENOM" id="CLU_061281_2_2_9"/>
<dbReference type="OrthoDB" id="9806837at2"/>
<dbReference type="UniPathway" id="UPA00056">
    <property type="reaction ID" value="UER00093"/>
</dbReference>
<dbReference type="Proteomes" id="UP000001417">
    <property type="component" value="Chromosome"/>
</dbReference>
<dbReference type="GO" id="GO:0050518">
    <property type="term" value="F:2-C-methyl-D-erythritol 4-phosphate cytidylyltransferase activity"/>
    <property type="evidence" value="ECO:0000318"/>
    <property type="project" value="GO_Central"/>
</dbReference>
<dbReference type="GO" id="GO:0019288">
    <property type="term" value="P:isopentenyl diphosphate biosynthetic process, methylerythritol 4-phosphate pathway"/>
    <property type="evidence" value="ECO:0007669"/>
    <property type="project" value="UniProtKB-UniRule"/>
</dbReference>
<dbReference type="CDD" id="cd02516">
    <property type="entry name" value="CDP-ME_synthetase"/>
    <property type="match status" value="1"/>
</dbReference>
<dbReference type="FunFam" id="3.90.550.10:FF:000003">
    <property type="entry name" value="2-C-methyl-D-erythritol 4-phosphate cytidylyltransferase"/>
    <property type="match status" value="1"/>
</dbReference>
<dbReference type="Gene3D" id="3.90.550.10">
    <property type="entry name" value="Spore Coat Polysaccharide Biosynthesis Protein SpsA, Chain A"/>
    <property type="match status" value="1"/>
</dbReference>
<dbReference type="HAMAP" id="MF_00108">
    <property type="entry name" value="IspD"/>
    <property type="match status" value="1"/>
</dbReference>
<dbReference type="InterPro" id="IPR001228">
    <property type="entry name" value="IspD"/>
</dbReference>
<dbReference type="InterPro" id="IPR034683">
    <property type="entry name" value="IspD/TarI"/>
</dbReference>
<dbReference type="InterPro" id="IPR050088">
    <property type="entry name" value="IspD/TarI_cytidylyltransf_bact"/>
</dbReference>
<dbReference type="InterPro" id="IPR018294">
    <property type="entry name" value="ISPD_synthase_CS"/>
</dbReference>
<dbReference type="InterPro" id="IPR029044">
    <property type="entry name" value="Nucleotide-diphossugar_trans"/>
</dbReference>
<dbReference type="NCBIfam" id="TIGR00453">
    <property type="entry name" value="ispD"/>
    <property type="match status" value="1"/>
</dbReference>
<dbReference type="PANTHER" id="PTHR32125">
    <property type="entry name" value="2-C-METHYL-D-ERYTHRITOL 4-PHOSPHATE CYTIDYLYLTRANSFERASE, CHLOROPLASTIC"/>
    <property type="match status" value="1"/>
</dbReference>
<dbReference type="PANTHER" id="PTHR32125:SF4">
    <property type="entry name" value="2-C-METHYL-D-ERYTHRITOL 4-PHOSPHATE CYTIDYLYLTRANSFERASE, CHLOROPLASTIC"/>
    <property type="match status" value="1"/>
</dbReference>
<dbReference type="Pfam" id="PF01128">
    <property type="entry name" value="IspD"/>
    <property type="match status" value="1"/>
</dbReference>
<dbReference type="SUPFAM" id="SSF53448">
    <property type="entry name" value="Nucleotide-diphospho-sugar transferases"/>
    <property type="match status" value="1"/>
</dbReference>
<dbReference type="PROSITE" id="PS01295">
    <property type="entry name" value="ISPD"/>
    <property type="match status" value="1"/>
</dbReference>
<evidence type="ECO:0000255" key="1">
    <source>
        <dbReference type="HAMAP-Rule" id="MF_00108"/>
    </source>
</evidence>
<accession>Q81J63</accession>
<name>ISPD_BACCR</name>
<proteinExistence type="inferred from homology"/>
<reference key="1">
    <citation type="journal article" date="2003" name="Nature">
        <title>Genome sequence of Bacillus cereus and comparative analysis with Bacillus anthracis.</title>
        <authorList>
            <person name="Ivanova N."/>
            <person name="Sorokin A."/>
            <person name="Anderson I."/>
            <person name="Galleron N."/>
            <person name="Candelon B."/>
            <person name="Kapatral V."/>
            <person name="Bhattacharyya A."/>
            <person name="Reznik G."/>
            <person name="Mikhailova N."/>
            <person name="Lapidus A."/>
            <person name="Chu L."/>
            <person name="Mazur M."/>
            <person name="Goltsman E."/>
            <person name="Larsen N."/>
            <person name="D'Souza M."/>
            <person name="Walunas T."/>
            <person name="Grechkin Y."/>
            <person name="Pusch G."/>
            <person name="Haselkorn R."/>
            <person name="Fonstein M."/>
            <person name="Ehrlich S.D."/>
            <person name="Overbeek R."/>
            <person name="Kyrpides N.C."/>
        </authorList>
    </citation>
    <scope>NUCLEOTIDE SEQUENCE [LARGE SCALE GENOMIC DNA]</scope>
    <source>
        <strain>ATCC 14579 / DSM 31 / CCUG 7414 / JCM 2152 / NBRC 15305 / NCIMB 9373 / NCTC 2599 / NRRL B-3711</strain>
    </source>
</reference>
<protein>
    <recommendedName>
        <fullName evidence="1">2-C-methyl-D-erythritol 4-phosphate cytidylyltransferase</fullName>
        <ecNumber evidence="1">2.7.7.60</ecNumber>
    </recommendedName>
    <alternativeName>
        <fullName evidence="1">4-diphosphocytidyl-2C-methyl-D-erythritol synthase</fullName>
    </alternativeName>
    <alternativeName>
        <fullName evidence="1">MEP cytidylyltransferase</fullName>
        <shortName evidence="1">MCT</shortName>
    </alternativeName>
</protein>
<feature type="chain" id="PRO_0000075548" description="2-C-methyl-D-erythritol 4-phosphate cytidylyltransferase">
    <location>
        <begin position="1"/>
        <end position="226"/>
    </location>
</feature>
<feature type="site" description="Transition state stabilizer" evidence="1">
    <location>
        <position position="14"/>
    </location>
</feature>
<feature type="site" description="Transition state stabilizer" evidence="1">
    <location>
        <position position="21"/>
    </location>
</feature>
<feature type="site" description="Positions MEP for the nucleophilic attack" evidence="1">
    <location>
        <position position="151"/>
    </location>
</feature>
<feature type="site" description="Positions MEP for the nucleophilic attack" evidence="1">
    <location>
        <position position="207"/>
    </location>
</feature>
<gene>
    <name evidence="1" type="primary">ispD</name>
    <name type="ordered locus">BC_0106</name>
</gene>
<comment type="function">
    <text evidence="1">Catalyzes the formation of 4-diphosphocytidyl-2-C-methyl-D-erythritol from CTP and 2-C-methyl-D-erythritol 4-phosphate (MEP).</text>
</comment>
<comment type="catalytic activity">
    <reaction evidence="1">
        <text>2-C-methyl-D-erythritol 4-phosphate + CTP + H(+) = 4-CDP-2-C-methyl-D-erythritol + diphosphate</text>
        <dbReference type="Rhea" id="RHEA:13429"/>
        <dbReference type="ChEBI" id="CHEBI:15378"/>
        <dbReference type="ChEBI" id="CHEBI:33019"/>
        <dbReference type="ChEBI" id="CHEBI:37563"/>
        <dbReference type="ChEBI" id="CHEBI:57823"/>
        <dbReference type="ChEBI" id="CHEBI:58262"/>
        <dbReference type="EC" id="2.7.7.60"/>
    </reaction>
</comment>
<comment type="pathway">
    <text evidence="1">Isoprenoid biosynthesis; isopentenyl diphosphate biosynthesis via DXP pathway; isopentenyl diphosphate from 1-deoxy-D-xylulose 5-phosphate: step 2/6.</text>
</comment>
<comment type="similarity">
    <text evidence="1">Belongs to the IspD/TarI cytidylyltransferase family. IspD subfamily.</text>
</comment>